<proteinExistence type="inferred from homology"/>
<sequence>MGEVSAIVLAASQAAEEGGESSNFLIPNGTFFVVLAIFLVVLAVIGTFVVPPILKVLRERDAMVAKTLADNKKSDEQFAAAQADYDEAMTEARVQASSLRDNARADGRKVIEDARVRAEQQVASTLQTAHEQLKRERDAVELDLRAHVGTMSATLASRILGVDLTASAATR</sequence>
<organism>
    <name type="scientific">Mycobacterium bovis (strain ATCC BAA-935 / AF2122/97)</name>
    <dbReference type="NCBI Taxonomy" id="233413"/>
    <lineage>
        <taxon>Bacteria</taxon>
        <taxon>Bacillati</taxon>
        <taxon>Actinomycetota</taxon>
        <taxon>Actinomycetes</taxon>
        <taxon>Mycobacteriales</taxon>
        <taxon>Mycobacteriaceae</taxon>
        <taxon>Mycobacterium</taxon>
        <taxon>Mycobacterium tuberculosis complex</taxon>
    </lineage>
</organism>
<evidence type="ECO:0000255" key="1">
    <source>
        <dbReference type="HAMAP-Rule" id="MF_01398"/>
    </source>
</evidence>
<keyword id="KW-0066">ATP synthesis</keyword>
<keyword id="KW-1003">Cell membrane</keyword>
<keyword id="KW-0138">CF(0)</keyword>
<keyword id="KW-0375">Hydrogen ion transport</keyword>
<keyword id="KW-0406">Ion transport</keyword>
<keyword id="KW-0472">Membrane</keyword>
<keyword id="KW-1185">Reference proteome</keyword>
<keyword id="KW-0812">Transmembrane</keyword>
<keyword id="KW-1133">Transmembrane helix</keyword>
<keyword id="KW-0813">Transport</keyword>
<dbReference type="EMBL" id="LT708304">
    <property type="protein sequence ID" value="SIT99941.1"/>
    <property type="molecule type" value="Genomic_DNA"/>
</dbReference>
<dbReference type="RefSeq" id="NP_854992.1">
    <property type="nucleotide sequence ID" value="NC_002945.3"/>
</dbReference>
<dbReference type="RefSeq" id="WP_003898818.1">
    <property type="nucleotide sequence ID" value="NC_002945.4"/>
</dbReference>
<dbReference type="SMR" id="P63657"/>
<dbReference type="KEGG" id="mbo:BQ2027_MB1338"/>
<dbReference type="PATRIC" id="fig|233413.5.peg.1467"/>
<dbReference type="Proteomes" id="UP000001419">
    <property type="component" value="Chromosome"/>
</dbReference>
<dbReference type="GO" id="GO:0005886">
    <property type="term" value="C:plasma membrane"/>
    <property type="evidence" value="ECO:0007669"/>
    <property type="project" value="UniProtKB-SubCell"/>
</dbReference>
<dbReference type="GO" id="GO:0045259">
    <property type="term" value="C:proton-transporting ATP synthase complex"/>
    <property type="evidence" value="ECO:0007669"/>
    <property type="project" value="UniProtKB-KW"/>
</dbReference>
<dbReference type="GO" id="GO:0046933">
    <property type="term" value="F:proton-transporting ATP synthase activity, rotational mechanism"/>
    <property type="evidence" value="ECO:0007669"/>
    <property type="project" value="UniProtKB-UniRule"/>
</dbReference>
<dbReference type="GO" id="GO:0046961">
    <property type="term" value="F:proton-transporting ATPase activity, rotational mechanism"/>
    <property type="evidence" value="ECO:0007669"/>
    <property type="project" value="TreeGrafter"/>
</dbReference>
<dbReference type="CDD" id="cd06503">
    <property type="entry name" value="ATP-synt_Fo_b"/>
    <property type="match status" value="1"/>
</dbReference>
<dbReference type="Gene3D" id="1.20.5.620">
    <property type="entry name" value="F1F0 ATP synthase subunit B, membrane domain"/>
    <property type="match status" value="1"/>
</dbReference>
<dbReference type="HAMAP" id="MF_01398">
    <property type="entry name" value="ATP_synth_b_bprime"/>
    <property type="match status" value="1"/>
</dbReference>
<dbReference type="InterPro" id="IPR028987">
    <property type="entry name" value="ATP_synth_B-like_membr_sf"/>
</dbReference>
<dbReference type="InterPro" id="IPR002146">
    <property type="entry name" value="ATP_synth_b/b'su_bac/chlpt"/>
</dbReference>
<dbReference type="InterPro" id="IPR050059">
    <property type="entry name" value="ATP_synthase_B_chain"/>
</dbReference>
<dbReference type="NCBIfam" id="NF004412">
    <property type="entry name" value="PRK05759.1-3"/>
    <property type="match status" value="1"/>
</dbReference>
<dbReference type="PANTHER" id="PTHR33445:SF1">
    <property type="entry name" value="ATP SYNTHASE SUBUNIT B"/>
    <property type="match status" value="1"/>
</dbReference>
<dbReference type="PANTHER" id="PTHR33445">
    <property type="entry name" value="ATP SYNTHASE SUBUNIT B', CHLOROPLASTIC"/>
    <property type="match status" value="1"/>
</dbReference>
<dbReference type="Pfam" id="PF00430">
    <property type="entry name" value="ATP-synt_B"/>
    <property type="match status" value="1"/>
</dbReference>
<dbReference type="SUPFAM" id="SSF81573">
    <property type="entry name" value="F1F0 ATP synthase subunit B, membrane domain"/>
    <property type="match status" value="1"/>
</dbReference>
<accession>P63657</accession>
<accession>A0A1R3XXZ0</accession>
<accession>Q10596</accession>
<accession>X2BHY3</accession>
<gene>
    <name evidence="1" type="primary">atpF</name>
    <name type="ordered locus">BQ2027_MB1338</name>
</gene>
<name>ATPF_MYCBO</name>
<protein>
    <recommendedName>
        <fullName evidence="1">ATP synthase subunit b</fullName>
    </recommendedName>
    <alternativeName>
        <fullName evidence="1">ATP synthase F(0) sector subunit b</fullName>
    </alternativeName>
    <alternativeName>
        <fullName evidence="1">ATPase subunit I</fullName>
    </alternativeName>
    <alternativeName>
        <fullName evidence="1">F-type ATPase subunit b</fullName>
        <shortName evidence="1">F-ATPase subunit b</shortName>
    </alternativeName>
</protein>
<reference key="1">
    <citation type="journal article" date="2003" name="Proc. Natl. Acad. Sci. U.S.A.">
        <title>The complete genome sequence of Mycobacterium bovis.</title>
        <authorList>
            <person name="Garnier T."/>
            <person name="Eiglmeier K."/>
            <person name="Camus J.-C."/>
            <person name="Medina N."/>
            <person name="Mansoor H."/>
            <person name="Pryor M."/>
            <person name="Duthoy S."/>
            <person name="Grondin S."/>
            <person name="Lacroix C."/>
            <person name="Monsempe C."/>
            <person name="Simon S."/>
            <person name="Harris B."/>
            <person name="Atkin R."/>
            <person name="Doggett J."/>
            <person name="Mayes R."/>
            <person name="Keating L."/>
            <person name="Wheeler P.R."/>
            <person name="Parkhill J."/>
            <person name="Barrell B.G."/>
            <person name="Cole S.T."/>
            <person name="Gordon S.V."/>
            <person name="Hewinson R.G."/>
        </authorList>
    </citation>
    <scope>NUCLEOTIDE SEQUENCE [LARGE SCALE GENOMIC DNA]</scope>
    <source>
        <strain>ATCC BAA-935 / AF2122/97</strain>
    </source>
</reference>
<reference key="2">
    <citation type="journal article" date="2017" name="Genome Announc.">
        <title>Updated reference genome sequence and annotation of Mycobacterium bovis AF2122/97.</title>
        <authorList>
            <person name="Malone K.M."/>
            <person name="Farrell D."/>
            <person name="Stuber T.P."/>
            <person name="Schubert O.T."/>
            <person name="Aebersold R."/>
            <person name="Robbe-Austerman S."/>
            <person name="Gordon S.V."/>
        </authorList>
    </citation>
    <scope>NUCLEOTIDE SEQUENCE [LARGE SCALE GENOMIC DNA]</scope>
    <scope>GENOME REANNOTATION</scope>
    <source>
        <strain>ATCC BAA-935 / AF2122/97</strain>
    </source>
</reference>
<comment type="function">
    <text evidence="1">F(1)F(0) ATP synthase produces ATP from ADP in the presence of a proton or sodium gradient. F-type ATPases consist of two structural domains, F(1) containing the extramembraneous catalytic core and F(0) containing the membrane proton channel, linked together by a central stalk and a peripheral stalk. During catalysis, ATP synthesis in the catalytic domain of F(1) is coupled via a rotary mechanism of the central stalk subunits to proton translocation.</text>
</comment>
<comment type="function">
    <text evidence="1">Component of the F(0) channel, it forms part of the peripheral stalk, linking F(1) to F(0).</text>
</comment>
<comment type="subunit">
    <text evidence="1">F-type ATPases have 2 components, F(1) - the catalytic core - and F(0) - the membrane proton channel. F(1) has five subunits: alpha(3), beta(3), gamma(1), delta(1), epsilon(1). F(0) has three main subunits: a(1), b(2) and c(10-14). The alpha and beta chains form an alternating ring which encloses part of the gamma chain. F(1) is attached to F(0) by a central stalk formed by the gamma and epsilon chains, while a peripheral stalk is formed by the delta and b chains.</text>
</comment>
<comment type="subcellular location">
    <subcellularLocation>
        <location evidence="1">Cell membrane</location>
        <topology evidence="1">Single-pass membrane protein</topology>
    </subcellularLocation>
</comment>
<comment type="similarity">
    <text evidence="1">Belongs to the ATPase B chain family.</text>
</comment>
<feature type="chain" id="PRO_0000082382" description="ATP synthase subunit b">
    <location>
        <begin position="1"/>
        <end position="171"/>
    </location>
</feature>
<feature type="transmembrane region" description="Helical" evidence="1">
    <location>
        <begin position="31"/>
        <end position="51"/>
    </location>
</feature>